<comment type="function">
    <text evidence="1">Endonuclease that removes tRNA introns. Cleaves pre-tRNA at the 5'- and 3'-splice sites to release the intron. The products are an intron and two tRNA half-molecules bearing 2',3' cyclic phosphate and 5'-OH termini. Recognizes a pseudosymmetric substrate in which 2 bulged loops of 3 bases are separated by a stem of 4 bp.</text>
</comment>
<comment type="catalytic activity">
    <reaction evidence="1">
        <text>pretRNA = a 3'-half-tRNA molecule with a 5'-OH end + a 5'-half-tRNA molecule with a 2',3'-cyclic phosphate end + an intron with a 2',3'-cyclic phosphate and a 5'-hydroxyl terminus.</text>
        <dbReference type="EC" id="4.6.1.16"/>
    </reaction>
</comment>
<comment type="subunit">
    <text evidence="1">Homotetramer; although the tetramer contains four active sites, only two participate in the cleavage. Therefore, it should be considered as a dimer of dimers.</text>
</comment>
<comment type="similarity">
    <text evidence="1">Belongs to the tRNA-intron endonuclease family. Archaeal short subfamily.</text>
</comment>
<keyword id="KW-0002">3D-structure</keyword>
<keyword id="KW-0456">Lyase</keyword>
<keyword id="KW-1185">Reference proteome</keyword>
<keyword id="KW-0819">tRNA processing</keyword>
<proteinExistence type="evidence at protein level"/>
<dbReference type="EC" id="4.6.1.16" evidence="1"/>
<dbReference type="EMBL" id="AE009439">
    <property type="protein sequence ID" value="AAM01556.1"/>
    <property type="molecule type" value="Genomic_DNA"/>
</dbReference>
<dbReference type="PDB" id="5X89">
    <property type="method" value="X-ray"/>
    <property type="resolution" value="1.53 A"/>
    <property type="chains" value="A=2-179"/>
</dbReference>
<dbReference type="PDBsum" id="5X89"/>
<dbReference type="SMR" id="Q8TGZ7"/>
<dbReference type="STRING" id="190192.MK0341"/>
<dbReference type="PaxDb" id="190192-MK0341"/>
<dbReference type="EnsemblBacteria" id="AAM01556">
    <property type="protein sequence ID" value="AAM01556"/>
    <property type="gene ID" value="MK0341"/>
</dbReference>
<dbReference type="KEGG" id="mka:MK0341"/>
<dbReference type="HOGENOM" id="CLU_114393_0_0_2"/>
<dbReference type="InParanoid" id="Q8TGZ7"/>
<dbReference type="Proteomes" id="UP000001826">
    <property type="component" value="Chromosome"/>
</dbReference>
<dbReference type="GO" id="GO:0016829">
    <property type="term" value="F:lyase activity"/>
    <property type="evidence" value="ECO:0007669"/>
    <property type="project" value="UniProtKB-KW"/>
</dbReference>
<dbReference type="GO" id="GO:0003676">
    <property type="term" value="F:nucleic acid binding"/>
    <property type="evidence" value="ECO:0007669"/>
    <property type="project" value="InterPro"/>
</dbReference>
<dbReference type="GO" id="GO:0000213">
    <property type="term" value="F:tRNA-intron endonuclease activity"/>
    <property type="evidence" value="ECO:0007669"/>
    <property type="project" value="UniProtKB-UniRule"/>
</dbReference>
<dbReference type="GO" id="GO:0000379">
    <property type="term" value="P:tRNA-type intron splice site recognition and cleavage"/>
    <property type="evidence" value="ECO:0007669"/>
    <property type="project" value="TreeGrafter"/>
</dbReference>
<dbReference type="CDD" id="cd22363">
    <property type="entry name" value="tRNA-intron_lyase_C"/>
    <property type="match status" value="1"/>
</dbReference>
<dbReference type="FunFam" id="3.40.1350.10:FF:000006">
    <property type="entry name" value="tRNA-splicing endonuclease"/>
    <property type="match status" value="1"/>
</dbReference>
<dbReference type="Gene3D" id="3.40.1350.10">
    <property type="match status" value="1"/>
</dbReference>
<dbReference type="Gene3D" id="3.40.1170.20">
    <property type="entry name" value="tRNA intron endonuclease, N-terminal domain"/>
    <property type="match status" value="1"/>
</dbReference>
<dbReference type="HAMAP" id="MF_01833">
    <property type="entry name" value="EndA_short"/>
    <property type="match status" value="1"/>
</dbReference>
<dbReference type="InterPro" id="IPR011856">
    <property type="entry name" value="tRNA_endonuc-like_dom_sf"/>
</dbReference>
<dbReference type="InterPro" id="IPR036167">
    <property type="entry name" value="tRNA_intron_Endo_cat-like_sf"/>
</dbReference>
<dbReference type="InterPro" id="IPR006677">
    <property type="entry name" value="tRNA_intron_Endonuc_cat-like"/>
</dbReference>
<dbReference type="InterPro" id="IPR006678">
    <property type="entry name" value="tRNA_intron_Endonuc_N"/>
</dbReference>
<dbReference type="InterPro" id="IPR036740">
    <property type="entry name" value="tRNA_intron_Endonuc_N_sf"/>
</dbReference>
<dbReference type="InterPro" id="IPR006676">
    <property type="entry name" value="tRNA_splic"/>
</dbReference>
<dbReference type="InterPro" id="IPR016442">
    <property type="entry name" value="tRNA_splic_arch_short"/>
</dbReference>
<dbReference type="NCBIfam" id="TIGR00324">
    <property type="entry name" value="endA"/>
    <property type="match status" value="1"/>
</dbReference>
<dbReference type="PANTHER" id="PTHR13070:SF0">
    <property type="entry name" value="TRNA-SPLICING ENDONUCLEASE SUBUNIT SEN34"/>
    <property type="match status" value="1"/>
</dbReference>
<dbReference type="PANTHER" id="PTHR13070">
    <property type="entry name" value="TRNA-SPLICING ENDONUCLEASE SUBUNIT SEN34-RELATED"/>
    <property type="match status" value="1"/>
</dbReference>
<dbReference type="Pfam" id="PF01974">
    <property type="entry name" value="tRNA_int_endo"/>
    <property type="match status" value="1"/>
</dbReference>
<dbReference type="Pfam" id="PF02778">
    <property type="entry name" value="tRNA_int_endo_N"/>
    <property type="match status" value="1"/>
</dbReference>
<dbReference type="PIRSF" id="PIRSF005285">
    <property type="entry name" value="tRNA_splic_archaea"/>
    <property type="match status" value="1"/>
</dbReference>
<dbReference type="SUPFAM" id="SSF53032">
    <property type="entry name" value="tRNA-intron endonuclease catalytic domain-like"/>
    <property type="match status" value="1"/>
</dbReference>
<dbReference type="SUPFAM" id="SSF55267">
    <property type="entry name" value="tRNA-intron endonuclease N-terminal domain-like"/>
    <property type="match status" value="1"/>
</dbReference>
<protein>
    <recommendedName>
        <fullName evidence="1">tRNA-splicing endonuclease</fullName>
        <ecNumber evidence="1">4.6.1.16</ecNumber>
    </recommendedName>
    <alternativeName>
        <fullName evidence="1">tRNA-intron endonuclease</fullName>
    </alternativeName>
</protein>
<accession>Q8TGZ7</accession>
<organism>
    <name type="scientific">Methanopyrus kandleri (strain AV19 / DSM 6324 / JCM 9639 / NBRC 100938)</name>
    <dbReference type="NCBI Taxonomy" id="190192"/>
    <lineage>
        <taxon>Archaea</taxon>
        <taxon>Methanobacteriati</taxon>
        <taxon>Methanobacteriota</taxon>
        <taxon>Methanomada group</taxon>
        <taxon>Methanopyri</taxon>
        <taxon>Methanopyrales</taxon>
        <taxon>Methanopyraceae</taxon>
        <taxon>Methanopyrus</taxon>
    </lineage>
</organism>
<name>ENDA_METKA</name>
<gene>
    <name evidence="1" type="primary">endA</name>
    <name type="ordered locus">MK0341</name>
</gene>
<evidence type="ECO:0000255" key="1">
    <source>
        <dbReference type="HAMAP-Rule" id="MF_01833"/>
    </source>
</evidence>
<evidence type="ECO:0007829" key="2">
    <source>
        <dbReference type="PDB" id="5X89"/>
    </source>
</evidence>
<sequence>MLCAGNGGKELPRAKVFEGGSLVSKDYEDLKRRYFGTEHGNVLFLDPFETVYLTEKGEIDPETPEGEPMSVEELLSFFERRRPGFRAGYVVYRDLTERGYVVKSGFKYGGRFRVYEEDPDREHSKYVVRVVEPDTELSTRDVLRATRLAHSVRKDFVLAVVEDVEEPRIEYVMWRWKRL</sequence>
<feature type="chain" id="PRO_0000109471" description="tRNA-splicing endonuclease">
    <location>
        <begin position="1"/>
        <end position="179"/>
    </location>
</feature>
<feature type="active site" evidence="1">
    <location>
        <position position="115"/>
    </location>
</feature>
<feature type="active site" evidence="1">
    <location>
        <position position="123"/>
    </location>
</feature>
<feature type="active site" evidence="1">
    <location>
        <position position="154"/>
    </location>
</feature>
<feature type="strand" evidence="2">
    <location>
        <begin position="13"/>
        <end position="17"/>
    </location>
</feature>
<feature type="strand" evidence="2">
    <location>
        <begin position="20"/>
        <end position="23"/>
    </location>
</feature>
<feature type="helix" evidence="2">
    <location>
        <begin position="28"/>
        <end position="32"/>
    </location>
</feature>
<feature type="strand" evidence="2">
    <location>
        <begin position="36"/>
        <end position="39"/>
    </location>
</feature>
<feature type="strand" evidence="2">
    <location>
        <begin position="42"/>
        <end position="45"/>
    </location>
</feature>
<feature type="helix" evidence="2">
    <location>
        <begin position="47"/>
        <end position="55"/>
    </location>
</feature>
<feature type="strand" evidence="2">
    <location>
        <begin position="60"/>
        <end position="62"/>
    </location>
</feature>
<feature type="helix" evidence="2">
    <location>
        <begin position="71"/>
        <end position="79"/>
    </location>
</feature>
<feature type="helix" evidence="2">
    <location>
        <begin position="85"/>
        <end position="97"/>
    </location>
</feature>
<feature type="strand" evidence="2">
    <location>
        <begin position="101"/>
        <end position="104"/>
    </location>
</feature>
<feature type="helix" evidence="2">
    <location>
        <begin position="106"/>
        <end position="108"/>
    </location>
</feature>
<feature type="strand" evidence="2">
    <location>
        <begin position="110"/>
        <end position="117"/>
    </location>
</feature>
<feature type="turn" evidence="2">
    <location>
        <begin position="119"/>
        <end position="121"/>
    </location>
</feature>
<feature type="strand" evidence="2">
    <location>
        <begin position="126"/>
        <end position="131"/>
    </location>
</feature>
<feature type="helix" evidence="2">
    <location>
        <begin position="139"/>
        <end position="151"/>
    </location>
</feature>
<feature type="strand" evidence="2">
    <location>
        <begin position="155"/>
        <end position="163"/>
    </location>
</feature>
<feature type="turn" evidence="2">
    <location>
        <begin position="164"/>
        <end position="167"/>
    </location>
</feature>
<feature type="strand" evidence="2">
    <location>
        <begin position="168"/>
        <end position="177"/>
    </location>
</feature>
<reference key="1">
    <citation type="journal article" date="2002" name="Proc. Natl. Acad. Sci. U.S.A.">
        <title>The complete genome of hyperthermophile Methanopyrus kandleri AV19 and monophyly of archaeal methanogens.</title>
        <authorList>
            <person name="Slesarev A.I."/>
            <person name="Mezhevaya K.V."/>
            <person name="Makarova K.S."/>
            <person name="Polushin N.N."/>
            <person name="Shcherbinina O.V."/>
            <person name="Shakhova V.V."/>
            <person name="Belova G.I."/>
            <person name="Aravind L."/>
            <person name="Natale D.A."/>
            <person name="Rogozin I.B."/>
            <person name="Tatusov R.L."/>
            <person name="Wolf Y.I."/>
            <person name="Stetter K.O."/>
            <person name="Malykh A.G."/>
            <person name="Koonin E.V."/>
            <person name="Kozyavkin S.A."/>
        </authorList>
    </citation>
    <scope>NUCLEOTIDE SEQUENCE [LARGE SCALE GENOMIC DNA]</scope>
    <source>
        <strain>AV19 / DSM 6324 / JCM 9639 / NBRC 100938</strain>
    </source>
</reference>